<dbReference type="EMBL" id="CP000742">
    <property type="protein sequence ID" value="ABR54360.1"/>
    <property type="molecule type" value="Genomic_DNA"/>
</dbReference>
<dbReference type="RefSeq" id="WP_011972263.1">
    <property type="nucleotide sequence ID" value="NC_009634.1"/>
</dbReference>
<dbReference type="SMR" id="A6UPD8"/>
<dbReference type="STRING" id="406327.Mevan_0453"/>
<dbReference type="GeneID" id="5325327"/>
<dbReference type="KEGG" id="mvn:Mevan_0453"/>
<dbReference type="eggNOG" id="arCOG01742">
    <property type="taxonomic scope" value="Archaea"/>
</dbReference>
<dbReference type="HOGENOM" id="CLU_035759_3_0_2"/>
<dbReference type="OrthoDB" id="1011at2157"/>
<dbReference type="Proteomes" id="UP000001107">
    <property type="component" value="Chromosome"/>
</dbReference>
<dbReference type="GO" id="GO:0005737">
    <property type="term" value="C:cytoplasm"/>
    <property type="evidence" value="ECO:0007669"/>
    <property type="project" value="UniProtKB-SubCell"/>
</dbReference>
<dbReference type="GO" id="GO:0016149">
    <property type="term" value="F:translation release factor activity, codon specific"/>
    <property type="evidence" value="ECO:0007669"/>
    <property type="project" value="UniProtKB-UniRule"/>
</dbReference>
<dbReference type="FunFam" id="3.30.1330.30:FF:000032">
    <property type="entry name" value="Eukaryotic peptide chain release factor subunit 1"/>
    <property type="match status" value="1"/>
</dbReference>
<dbReference type="FunFam" id="3.30.420.60:FF:000003">
    <property type="entry name" value="Peptide chain release factor subunit 1"/>
    <property type="match status" value="1"/>
</dbReference>
<dbReference type="FunFam" id="3.30.960.10:FF:000003">
    <property type="entry name" value="Peptide chain release factor subunit 1"/>
    <property type="match status" value="1"/>
</dbReference>
<dbReference type="Gene3D" id="1.20.5.170">
    <property type="match status" value="1"/>
</dbReference>
<dbReference type="Gene3D" id="3.30.1330.30">
    <property type="match status" value="1"/>
</dbReference>
<dbReference type="Gene3D" id="3.30.960.10">
    <property type="entry name" value="eRF1 domain 1"/>
    <property type="match status" value="1"/>
</dbReference>
<dbReference type="Gene3D" id="3.30.420.60">
    <property type="entry name" value="eRF1 domain 2"/>
    <property type="match status" value="1"/>
</dbReference>
<dbReference type="HAMAP" id="MF_00424">
    <property type="entry name" value="Rel_fact_arch_1"/>
    <property type="match status" value="1"/>
</dbReference>
<dbReference type="InterPro" id="IPR042226">
    <property type="entry name" value="eFR1_2_sf"/>
</dbReference>
<dbReference type="InterPro" id="IPR005140">
    <property type="entry name" value="eRF1_1_Pelota"/>
</dbReference>
<dbReference type="InterPro" id="IPR024049">
    <property type="entry name" value="eRF1_1_sf"/>
</dbReference>
<dbReference type="InterPro" id="IPR005141">
    <property type="entry name" value="eRF1_2"/>
</dbReference>
<dbReference type="InterPro" id="IPR005142">
    <property type="entry name" value="eRF1_3"/>
</dbReference>
<dbReference type="InterPro" id="IPR020918">
    <property type="entry name" value="Peptide_chain-rel_aRF1"/>
</dbReference>
<dbReference type="InterPro" id="IPR004403">
    <property type="entry name" value="Peptide_chain-rel_eRF1/aRF1"/>
</dbReference>
<dbReference type="InterPro" id="IPR029064">
    <property type="entry name" value="Ribosomal_eL30-like_sf"/>
</dbReference>
<dbReference type="NCBIfam" id="TIGR03676">
    <property type="entry name" value="aRF1_eRF1"/>
    <property type="match status" value="1"/>
</dbReference>
<dbReference type="PANTHER" id="PTHR10113">
    <property type="entry name" value="PEPTIDE CHAIN RELEASE FACTOR SUBUNIT 1"/>
    <property type="match status" value="1"/>
</dbReference>
<dbReference type="Pfam" id="PF03463">
    <property type="entry name" value="eRF1_1"/>
    <property type="match status" value="1"/>
</dbReference>
<dbReference type="Pfam" id="PF03464">
    <property type="entry name" value="eRF1_2"/>
    <property type="match status" value="1"/>
</dbReference>
<dbReference type="Pfam" id="PF03465">
    <property type="entry name" value="eRF1_3"/>
    <property type="match status" value="1"/>
</dbReference>
<dbReference type="SMART" id="SM01194">
    <property type="entry name" value="eRF1_1"/>
    <property type="match status" value="1"/>
</dbReference>
<dbReference type="SUPFAM" id="SSF55315">
    <property type="entry name" value="L30e-like"/>
    <property type="match status" value="1"/>
</dbReference>
<dbReference type="SUPFAM" id="SSF55481">
    <property type="entry name" value="N-terminal domain of eukaryotic peptide chain release factor subunit 1, ERF1"/>
    <property type="match status" value="1"/>
</dbReference>
<dbReference type="SUPFAM" id="SSF53137">
    <property type="entry name" value="Translational machinery components"/>
    <property type="match status" value="1"/>
</dbReference>
<reference key="1">
    <citation type="submission" date="2007-06" db="EMBL/GenBank/DDBJ databases">
        <title>Complete sequence of Methanococcus vannielii SB.</title>
        <authorList>
            <consortium name="US DOE Joint Genome Institute"/>
            <person name="Copeland A."/>
            <person name="Lucas S."/>
            <person name="Lapidus A."/>
            <person name="Barry K."/>
            <person name="Glavina del Rio T."/>
            <person name="Dalin E."/>
            <person name="Tice H."/>
            <person name="Pitluck S."/>
            <person name="Chain P."/>
            <person name="Malfatti S."/>
            <person name="Shin M."/>
            <person name="Vergez L."/>
            <person name="Schmutz J."/>
            <person name="Larimer F."/>
            <person name="Land M."/>
            <person name="Hauser L."/>
            <person name="Kyrpides N."/>
            <person name="Anderson I."/>
            <person name="Sieprawska-Lupa M."/>
            <person name="Whitman W.B."/>
            <person name="Richardson P."/>
        </authorList>
    </citation>
    <scope>NUCLEOTIDE SEQUENCE [LARGE SCALE GENOMIC DNA]</scope>
    <source>
        <strain>ATCC 35089 / DSM 1224 / JCM 13029 / OCM 148 / SB</strain>
    </source>
</reference>
<keyword id="KW-0963">Cytoplasm</keyword>
<keyword id="KW-0648">Protein biosynthesis</keyword>
<accession>A6UPD8</accession>
<protein>
    <recommendedName>
        <fullName evidence="1">Peptide chain release factor subunit 1</fullName>
    </recommendedName>
    <alternativeName>
        <fullName evidence="1">Translation termination factor aRF1</fullName>
    </alternativeName>
</protein>
<name>RF1_METVS</name>
<sequence>MSENSSTDMYLFKKSLKELKGKRGKGTELISVYVPAGRRLSDISQHLRQELSQSSNIKSKTTMKNVQSAIEVILQRLKLLKEPLEKGVIIFAGMIPRGGPGTEKMEVYVLEPPEPVKTFIYRCDSEFYTESLEDFIQDTEVYGVILVDRNEATIGTVKGKTITVLKKLTSGVPGKFKAGGQSARRLERLIDDAAHQFMVRIGEYSTESFMPILEEKKLRGLLIGGPGNTKNEFAEKDFLHHELKKKIIDTFDLCYTEEFGIRELLEKASDLLRDLDLMKEKNLIQKFFKELIKDDGGLSAYGESQVMRYLEMGAIDTLIVTEDIELTRVTIKCNNCNFKQEINVKTRDLYKFEDEVKTKICKQCSGSMYIEEEKDIIEYLSELCNIHNSDIVVVSTDTEEGSQISKAFKGMAAILRYKI</sequence>
<organism>
    <name type="scientific">Methanococcus vannielii (strain ATCC 35089 / DSM 1224 / JCM 13029 / OCM 148 / SB)</name>
    <dbReference type="NCBI Taxonomy" id="406327"/>
    <lineage>
        <taxon>Archaea</taxon>
        <taxon>Methanobacteriati</taxon>
        <taxon>Methanobacteriota</taxon>
        <taxon>Methanomada group</taxon>
        <taxon>Methanococci</taxon>
        <taxon>Methanococcales</taxon>
        <taxon>Methanococcaceae</taxon>
        <taxon>Methanococcus</taxon>
    </lineage>
</organism>
<feature type="chain" id="PRO_1000060108" description="Peptide chain release factor subunit 1">
    <location>
        <begin position="1"/>
        <end position="419"/>
    </location>
</feature>
<evidence type="ECO:0000255" key="1">
    <source>
        <dbReference type="HAMAP-Rule" id="MF_00424"/>
    </source>
</evidence>
<gene>
    <name evidence="1" type="primary">prf1</name>
    <name type="ordered locus">Mevan_0453</name>
</gene>
<proteinExistence type="inferred from homology"/>
<comment type="function">
    <text evidence="1">Directs the termination of nascent peptide synthesis (translation) in response to the termination codons UAA, UAG and UGA.</text>
</comment>
<comment type="subunit">
    <text evidence="1">Heterodimer of two subunits, one of which binds GTP.</text>
</comment>
<comment type="subcellular location">
    <subcellularLocation>
        <location evidence="1">Cytoplasm</location>
    </subcellularLocation>
</comment>
<comment type="similarity">
    <text evidence="1">Belongs to the eukaryotic release factor 1 family.</text>
</comment>